<evidence type="ECO:0000255" key="1">
    <source>
        <dbReference type="HAMAP-Rule" id="MF_00291"/>
    </source>
</evidence>
<evidence type="ECO:0000305" key="2"/>
<protein>
    <recommendedName>
        <fullName evidence="1">Small ribosomal subunit protein uS2</fullName>
    </recommendedName>
    <alternativeName>
        <fullName evidence="2">30S ribosomal protein S2</fullName>
    </alternativeName>
</protein>
<name>RS2_SYNS9</name>
<proteinExistence type="inferred from homology"/>
<keyword id="KW-1185">Reference proteome</keyword>
<keyword id="KW-0687">Ribonucleoprotein</keyword>
<keyword id="KW-0689">Ribosomal protein</keyword>
<reference key="1">
    <citation type="submission" date="2005-08" db="EMBL/GenBank/DDBJ databases">
        <title>Complete sequence of Synechococcus sp. CC9902.</title>
        <authorList>
            <person name="Copeland A."/>
            <person name="Lucas S."/>
            <person name="Lapidus A."/>
            <person name="Barry K."/>
            <person name="Detter J.C."/>
            <person name="Glavina T."/>
            <person name="Hammon N."/>
            <person name="Israni S."/>
            <person name="Pitluck S."/>
            <person name="Martinez M."/>
            <person name="Schmutz J."/>
            <person name="Larimer F."/>
            <person name="Land M."/>
            <person name="Kyrpides N."/>
            <person name="Ivanova N."/>
            <person name="Richardson P."/>
        </authorList>
    </citation>
    <scope>NUCLEOTIDE SEQUENCE [LARGE SCALE GENOMIC DNA]</scope>
    <source>
        <strain>CC9902</strain>
    </source>
</reference>
<accession>Q3AXI9</accession>
<dbReference type="EMBL" id="CP000097">
    <property type="protein sequence ID" value="ABB26211.1"/>
    <property type="molecule type" value="Genomic_DNA"/>
</dbReference>
<dbReference type="RefSeq" id="WP_009789902.1">
    <property type="nucleotide sequence ID" value="NC_007513.1"/>
</dbReference>
<dbReference type="SMR" id="Q3AXI9"/>
<dbReference type="STRING" id="316279.Syncc9902_1247"/>
<dbReference type="KEGG" id="sye:Syncc9902_1247"/>
<dbReference type="eggNOG" id="COG0052">
    <property type="taxonomic scope" value="Bacteria"/>
</dbReference>
<dbReference type="HOGENOM" id="CLU_040318_1_2_3"/>
<dbReference type="OrthoDB" id="9808036at2"/>
<dbReference type="Proteomes" id="UP000002712">
    <property type="component" value="Chromosome"/>
</dbReference>
<dbReference type="GO" id="GO:0022627">
    <property type="term" value="C:cytosolic small ribosomal subunit"/>
    <property type="evidence" value="ECO:0007669"/>
    <property type="project" value="TreeGrafter"/>
</dbReference>
<dbReference type="GO" id="GO:0003735">
    <property type="term" value="F:structural constituent of ribosome"/>
    <property type="evidence" value="ECO:0007669"/>
    <property type="project" value="InterPro"/>
</dbReference>
<dbReference type="GO" id="GO:0006412">
    <property type="term" value="P:translation"/>
    <property type="evidence" value="ECO:0007669"/>
    <property type="project" value="UniProtKB-UniRule"/>
</dbReference>
<dbReference type="CDD" id="cd01425">
    <property type="entry name" value="RPS2"/>
    <property type="match status" value="1"/>
</dbReference>
<dbReference type="FunFam" id="1.10.287.610:FF:000001">
    <property type="entry name" value="30S ribosomal protein S2"/>
    <property type="match status" value="1"/>
</dbReference>
<dbReference type="Gene3D" id="3.40.50.10490">
    <property type="entry name" value="Glucose-6-phosphate isomerase like protein, domain 1"/>
    <property type="match status" value="1"/>
</dbReference>
<dbReference type="Gene3D" id="1.10.287.610">
    <property type="entry name" value="Helix hairpin bin"/>
    <property type="match status" value="1"/>
</dbReference>
<dbReference type="HAMAP" id="MF_00291_B">
    <property type="entry name" value="Ribosomal_uS2_B"/>
    <property type="match status" value="1"/>
</dbReference>
<dbReference type="InterPro" id="IPR001865">
    <property type="entry name" value="Ribosomal_uS2"/>
</dbReference>
<dbReference type="InterPro" id="IPR005706">
    <property type="entry name" value="Ribosomal_uS2_bac/mit/plastid"/>
</dbReference>
<dbReference type="InterPro" id="IPR018130">
    <property type="entry name" value="Ribosomal_uS2_CS"/>
</dbReference>
<dbReference type="InterPro" id="IPR023591">
    <property type="entry name" value="Ribosomal_uS2_flav_dom_sf"/>
</dbReference>
<dbReference type="NCBIfam" id="TIGR01011">
    <property type="entry name" value="rpsB_bact"/>
    <property type="match status" value="1"/>
</dbReference>
<dbReference type="PANTHER" id="PTHR12534">
    <property type="entry name" value="30S RIBOSOMAL PROTEIN S2 PROKARYOTIC AND ORGANELLAR"/>
    <property type="match status" value="1"/>
</dbReference>
<dbReference type="PANTHER" id="PTHR12534:SF0">
    <property type="entry name" value="SMALL RIBOSOMAL SUBUNIT PROTEIN US2M"/>
    <property type="match status" value="1"/>
</dbReference>
<dbReference type="Pfam" id="PF00318">
    <property type="entry name" value="Ribosomal_S2"/>
    <property type="match status" value="1"/>
</dbReference>
<dbReference type="PRINTS" id="PR00395">
    <property type="entry name" value="RIBOSOMALS2"/>
</dbReference>
<dbReference type="SUPFAM" id="SSF52313">
    <property type="entry name" value="Ribosomal protein S2"/>
    <property type="match status" value="1"/>
</dbReference>
<dbReference type="PROSITE" id="PS00962">
    <property type="entry name" value="RIBOSOMAL_S2_1"/>
    <property type="match status" value="1"/>
</dbReference>
<feature type="chain" id="PRO_1000004106" description="Small ribosomal subunit protein uS2">
    <location>
        <begin position="1"/>
        <end position="239"/>
    </location>
</feature>
<sequence length="239" mass="26866">MAVVTLSEMMEAGAHFGHQTRRWNPKMSRYIYCARNGVHIIDLVKTAVCMNNAYKWTRSAARSGKRFLFVGTKKQASEVVALEAARCGAAYVNQRWLGGMLTNWTTMKARIDRLKDLERMESSGAIAMRPKKEGAVLRRELERLQKYLGGLKTMRRLPDVVVLVDQRRESNAVLEARKLDIPLVSMLDTNCDPDLCEVPIPCNDDAVRSVQLVLGRLADAINEGRHGSNEQRGGDDYEG</sequence>
<comment type="similarity">
    <text evidence="1">Belongs to the universal ribosomal protein uS2 family.</text>
</comment>
<gene>
    <name evidence="1" type="primary">rpsB</name>
    <name evidence="1" type="synonym">rps2</name>
    <name type="ordered locus">Syncc9902_1247</name>
</gene>
<organism>
    <name type="scientific">Synechococcus sp. (strain CC9902)</name>
    <dbReference type="NCBI Taxonomy" id="316279"/>
    <lineage>
        <taxon>Bacteria</taxon>
        <taxon>Bacillati</taxon>
        <taxon>Cyanobacteriota</taxon>
        <taxon>Cyanophyceae</taxon>
        <taxon>Synechococcales</taxon>
        <taxon>Synechococcaceae</taxon>
        <taxon>Synechococcus</taxon>
    </lineage>
</organism>